<gene>
    <name evidence="1" type="primary">eno</name>
    <name type="ordered locus">BVU_2641</name>
</gene>
<reference key="1">
    <citation type="journal article" date="2007" name="PLoS Biol.">
        <title>Evolution of symbiotic bacteria in the distal human intestine.</title>
        <authorList>
            <person name="Xu J."/>
            <person name="Mahowald M.A."/>
            <person name="Ley R.E."/>
            <person name="Lozupone C.A."/>
            <person name="Hamady M."/>
            <person name="Martens E.C."/>
            <person name="Henrissat B."/>
            <person name="Coutinho P.M."/>
            <person name="Minx P."/>
            <person name="Latreille P."/>
            <person name="Cordum H."/>
            <person name="Van Brunt A."/>
            <person name="Kim K."/>
            <person name="Fulton R.S."/>
            <person name="Fulton L.A."/>
            <person name="Clifton S.W."/>
            <person name="Wilson R.K."/>
            <person name="Knight R.D."/>
            <person name="Gordon J.I."/>
        </authorList>
    </citation>
    <scope>NUCLEOTIDE SEQUENCE [LARGE SCALE GENOMIC DNA]</scope>
    <source>
        <strain>ATCC 8482 / DSM 1447 / JCM 5826 / CCUG 4940 / NBRC 14291 / NCTC 11154</strain>
    </source>
</reference>
<name>ENO_PHOV8</name>
<accession>A6L3M9</accession>
<protein>
    <recommendedName>
        <fullName evidence="1">Enolase</fullName>
        <ecNumber evidence="1">4.2.1.11</ecNumber>
    </recommendedName>
    <alternativeName>
        <fullName evidence="1">2-phospho-D-glycerate hydro-lyase</fullName>
    </alternativeName>
    <alternativeName>
        <fullName evidence="1">2-phosphoglycerate dehydratase</fullName>
    </alternativeName>
</protein>
<dbReference type="EC" id="4.2.1.11" evidence="1"/>
<dbReference type="EMBL" id="CP000139">
    <property type="protein sequence ID" value="ABR40293.1"/>
    <property type="molecule type" value="Genomic_DNA"/>
</dbReference>
<dbReference type="RefSeq" id="WP_011965664.1">
    <property type="nucleotide sequence ID" value="NC_009614.1"/>
</dbReference>
<dbReference type="SMR" id="A6L3M9"/>
<dbReference type="STRING" id="435590.BVU_2641"/>
<dbReference type="PaxDb" id="435590-BVU_2641"/>
<dbReference type="GeneID" id="5303604"/>
<dbReference type="KEGG" id="bvu:BVU_2641"/>
<dbReference type="eggNOG" id="COG0148">
    <property type="taxonomic scope" value="Bacteria"/>
</dbReference>
<dbReference type="HOGENOM" id="CLU_031223_2_1_10"/>
<dbReference type="BioCyc" id="BVUL435590:G1G59-2746-MONOMER"/>
<dbReference type="UniPathway" id="UPA00109">
    <property type="reaction ID" value="UER00187"/>
</dbReference>
<dbReference type="Proteomes" id="UP000002861">
    <property type="component" value="Chromosome"/>
</dbReference>
<dbReference type="GO" id="GO:0009986">
    <property type="term" value="C:cell surface"/>
    <property type="evidence" value="ECO:0007669"/>
    <property type="project" value="UniProtKB-SubCell"/>
</dbReference>
<dbReference type="GO" id="GO:0005576">
    <property type="term" value="C:extracellular region"/>
    <property type="evidence" value="ECO:0007669"/>
    <property type="project" value="UniProtKB-SubCell"/>
</dbReference>
<dbReference type="GO" id="GO:0000015">
    <property type="term" value="C:phosphopyruvate hydratase complex"/>
    <property type="evidence" value="ECO:0007669"/>
    <property type="project" value="InterPro"/>
</dbReference>
<dbReference type="GO" id="GO:0000287">
    <property type="term" value="F:magnesium ion binding"/>
    <property type="evidence" value="ECO:0007669"/>
    <property type="project" value="UniProtKB-UniRule"/>
</dbReference>
<dbReference type="GO" id="GO:0004634">
    <property type="term" value="F:phosphopyruvate hydratase activity"/>
    <property type="evidence" value="ECO:0007669"/>
    <property type="project" value="UniProtKB-UniRule"/>
</dbReference>
<dbReference type="GO" id="GO:0006096">
    <property type="term" value="P:glycolytic process"/>
    <property type="evidence" value="ECO:0007669"/>
    <property type="project" value="UniProtKB-UniRule"/>
</dbReference>
<dbReference type="CDD" id="cd03313">
    <property type="entry name" value="enolase"/>
    <property type="match status" value="1"/>
</dbReference>
<dbReference type="FunFam" id="3.20.20.120:FF:000001">
    <property type="entry name" value="Enolase"/>
    <property type="match status" value="1"/>
</dbReference>
<dbReference type="FunFam" id="3.30.390.10:FF:000001">
    <property type="entry name" value="Enolase"/>
    <property type="match status" value="1"/>
</dbReference>
<dbReference type="Gene3D" id="3.20.20.120">
    <property type="entry name" value="Enolase-like C-terminal domain"/>
    <property type="match status" value="1"/>
</dbReference>
<dbReference type="Gene3D" id="3.30.390.10">
    <property type="entry name" value="Enolase-like, N-terminal domain"/>
    <property type="match status" value="1"/>
</dbReference>
<dbReference type="HAMAP" id="MF_00318">
    <property type="entry name" value="Enolase"/>
    <property type="match status" value="1"/>
</dbReference>
<dbReference type="InterPro" id="IPR000941">
    <property type="entry name" value="Enolase"/>
</dbReference>
<dbReference type="InterPro" id="IPR036849">
    <property type="entry name" value="Enolase-like_C_sf"/>
</dbReference>
<dbReference type="InterPro" id="IPR029017">
    <property type="entry name" value="Enolase-like_N"/>
</dbReference>
<dbReference type="InterPro" id="IPR020810">
    <property type="entry name" value="Enolase_C"/>
</dbReference>
<dbReference type="InterPro" id="IPR020809">
    <property type="entry name" value="Enolase_CS"/>
</dbReference>
<dbReference type="InterPro" id="IPR020811">
    <property type="entry name" value="Enolase_N"/>
</dbReference>
<dbReference type="NCBIfam" id="TIGR01060">
    <property type="entry name" value="eno"/>
    <property type="match status" value="1"/>
</dbReference>
<dbReference type="PANTHER" id="PTHR11902">
    <property type="entry name" value="ENOLASE"/>
    <property type="match status" value="1"/>
</dbReference>
<dbReference type="PANTHER" id="PTHR11902:SF1">
    <property type="entry name" value="ENOLASE"/>
    <property type="match status" value="1"/>
</dbReference>
<dbReference type="Pfam" id="PF00113">
    <property type="entry name" value="Enolase_C"/>
    <property type="match status" value="1"/>
</dbReference>
<dbReference type="Pfam" id="PF03952">
    <property type="entry name" value="Enolase_N"/>
    <property type="match status" value="1"/>
</dbReference>
<dbReference type="PIRSF" id="PIRSF001400">
    <property type="entry name" value="Enolase"/>
    <property type="match status" value="1"/>
</dbReference>
<dbReference type="PRINTS" id="PR00148">
    <property type="entry name" value="ENOLASE"/>
</dbReference>
<dbReference type="SFLD" id="SFLDS00001">
    <property type="entry name" value="Enolase"/>
    <property type="match status" value="1"/>
</dbReference>
<dbReference type="SFLD" id="SFLDF00002">
    <property type="entry name" value="enolase"/>
    <property type="match status" value="1"/>
</dbReference>
<dbReference type="SMART" id="SM01192">
    <property type="entry name" value="Enolase_C"/>
    <property type="match status" value="1"/>
</dbReference>
<dbReference type="SMART" id="SM01193">
    <property type="entry name" value="Enolase_N"/>
    <property type="match status" value="1"/>
</dbReference>
<dbReference type="SUPFAM" id="SSF51604">
    <property type="entry name" value="Enolase C-terminal domain-like"/>
    <property type="match status" value="1"/>
</dbReference>
<dbReference type="SUPFAM" id="SSF54826">
    <property type="entry name" value="Enolase N-terminal domain-like"/>
    <property type="match status" value="1"/>
</dbReference>
<dbReference type="PROSITE" id="PS00164">
    <property type="entry name" value="ENOLASE"/>
    <property type="match status" value="1"/>
</dbReference>
<keyword id="KW-0963">Cytoplasm</keyword>
<keyword id="KW-0324">Glycolysis</keyword>
<keyword id="KW-0456">Lyase</keyword>
<keyword id="KW-0460">Magnesium</keyword>
<keyword id="KW-0479">Metal-binding</keyword>
<keyword id="KW-0964">Secreted</keyword>
<feature type="chain" id="PRO_1000019186" description="Enolase">
    <location>
        <begin position="1"/>
        <end position="431"/>
    </location>
</feature>
<feature type="active site" description="Proton donor" evidence="1">
    <location>
        <position position="204"/>
    </location>
</feature>
<feature type="active site" description="Proton acceptor" evidence="1">
    <location>
        <position position="340"/>
    </location>
</feature>
<feature type="binding site" evidence="1">
    <location>
        <position position="162"/>
    </location>
    <ligand>
        <name>(2R)-2-phosphoglycerate</name>
        <dbReference type="ChEBI" id="CHEBI:58289"/>
    </ligand>
</feature>
<feature type="binding site" evidence="1">
    <location>
        <position position="241"/>
    </location>
    <ligand>
        <name>Mg(2+)</name>
        <dbReference type="ChEBI" id="CHEBI:18420"/>
    </ligand>
</feature>
<feature type="binding site" evidence="1">
    <location>
        <position position="288"/>
    </location>
    <ligand>
        <name>Mg(2+)</name>
        <dbReference type="ChEBI" id="CHEBI:18420"/>
    </ligand>
</feature>
<feature type="binding site" evidence="1">
    <location>
        <position position="315"/>
    </location>
    <ligand>
        <name>Mg(2+)</name>
        <dbReference type="ChEBI" id="CHEBI:18420"/>
    </ligand>
</feature>
<feature type="binding site" evidence="1">
    <location>
        <position position="340"/>
    </location>
    <ligand>
        <name>(2R)-2-phosphoglycerate</name>
        <dbReference type="ChEBI" id="CHEBI:58289"/>
    </ligand>
</feature>
<feature type="binding site" evidence="1">
    <location>
        <position position="369"/>
    </location>
    <ligand>
        <name>(2R)-2-phosphoglycerate</name>
        <dbReference type="ChEBI" id="CHEBI:58289"/>
    </ligand>
</feature>
<feature type="binding site" evidence="1">
    <location>
        <position position="370"/>
    </location>
    <ligand>
        <name>(2R)-2-phosphoglycerate</name>
        <dbReference type="ChEBI" id="CHEBI:58289"/>
    </ligand>
</feature>
<feature type="binding site" evidence="1">
    <location>
        <position position="391"/>
    </location>
    <ligand>
        <name>(2R)-2-phosphoglycerate</name>
        <dbReference type="ChEBI" id="CHEBI:58289"/>
    </ligand>
</feature>
<sequence length="431" mass="46753">MKIAEIKGREILDSRGNPTVEVDVILESGIMGRASVPSGASTGEHEALELRDGDKTRYGGKGVLKAVENINTLIAPALKGMDSMDQRGIDKAMLDLDGTPTKSKLGANAILGVSLAVAKAAANYLDIPLYRYIGGTNTYVMPVPMMNIINGGSHSDAPIAFQEFMIRPVGAKTFREALRMGAEVFHALKEVLKKRGLSTAVGDEGGFAPALDGTEDALNCILAAIEAAGYEPFKHITIGLDCASSEFYHDGIYDYTKFEGPKGEKRSAAEQVAYLEKLSWDYPIDSIEDGMAENDWEGWRMLTERLGNRCQLVGDDLFVTNVKFLEKGISEGCANSILIKVNQIGSLTETLDAIEMAQRNGYTTVTSHRSGETEDATIADIAVATNSGQIKTGSLSRSDRMAKYNQLLRIEEELGNRAVYGYKKIARNFKA</sequence>
<proteinExistence type="inferred from homology"/>
<organism>
    <name type="scientific">Phocaeicola vulgatus (strain ATCC 8482 / DSM 1447 / JCM 5826 / CCUG 4940 / NBRC 14291 / NCTC 11154)</name>
    <name type="common">Bacteroides vulgatus</name>
    <dbReference type="NCBI Taxonomy" id="435590"/>
    <lineage>
        <taxon>Bacteria</taxon>
        <taxon>Pseudomonadati</taxon>
        <taxon>Bacteroidota</taxon>
        <taxon>Bacteroidia</taxon>
        <taxon>Bacteroidales</taxon>
        <taxon>Bacteroidaceae</taxon>
        <taxon>Phocaeicola</taxon>
    </lineage>
</organism>
<comment type="function">
    <text evidence="1">Catalyzes the reversible conversion of 2-phosphoglycerate (2-PG) into phosphoenolpyruvate (PEP). It is essential for the degradation of carbohydrates via glycolysis.</text>
</comment>
<comment type="catalytic activity">
    <reaction evidence="1">
        <text>(2R)-2-phosphoglycerate = phosphoenolpyruvate + H2O</text>
        <dbReference type="Rhea" id="RHEA:10164"/>
        <dbReference type="ChEBI" id="CHEBI:15377"/>
        <dbReference type="ChEBI" id="CHEBI:58289"/>
        <dbReference type="ChEBI" id="CHEBI:58702"/>
        <dbReference type="EC" id="4.2.1.11"/>
    </reaction>
</comment>
<comment type="cofactor">
    <cofactor evidence="1">
        <name>Mg(2+)</name>
        <dbReference type="ChEBI" id="CHEBI:18420"/>
    </cofactor>
    <text evidence="1">Binds a second Mg(2+) ion via substrate during catalysis.</text>
</comment>
<comment type="pathway">
    <text evidence="1">Carbohydrate degradation; glycolysis; pyruvate from D-glyceraldehyde 3-phosphate: step 4/5.</text>
</comment>
<comment type="subcellular location">
    <subcellularLocation>
        <location evidence="1">Cytoplasm</location>
    </subcellularLocation>
    <subcellularLocation>
        <location evidence="1">Secreted</location>
    </subcellularLocation>
    <subcellularLocation>
        <location evidence="1">Cell surface</location>
    </subcellularLocation>
    <text evidence="1">Fractions of enolase are present in both the cytoplasm and on the cell surface.</text>
</comment>
<comment type="similarity">
    <text evidence="1">Belongs to the enolase family.</text>
</comment>
<evidence type="ECO:0000255" key="1">
    <source>
        <dbReference type="HAMAP-Rule" id="MF_00318"/>
    </source>
</evidence>